<keyword id="KW-0479">Metal-binding</keyword>
<keyword id="KW-1185">Reference proteome</keyword>
<keyword id="KW-0862">Zinc</keyword>
<keyword id="KW-0863">Zinc-finger</keyword>
<proteinExistence type="predicted"/>
<gene>
    <name type="primary">gtaC</name>
    <name type="ORF">DDB_G0277589</name>
</gene>
<name>GTAC_DICDI</name>
<evidence type="ECO:0000255" key="1">
    <source>
        <dbReference type="PROSITE-ProRule" id="PRU00094"/>
    </source>
</evidence>
<evidence type="ECO:0000256" key="2">
    <source>
        <dbReference type="SAM" id="MobiDB-lite"/>
    </source>
</evidence>
<feature type="chain" id="PRO_0000330436" description="GATA zinc finger domain-containing protein 3">
    <location>
        <begin position="1"/>
        <end position="587"/>
    </location>
</feature>
<feature type="zinc finger region" description="GATA-type" evidence="1">
    <location>
        <begin position="500"/>
        <end position="525"/>
    </location>
</feature>
<feature type="region of interest" description="Disordered" evidence="2">
    <location>
        <begin position="53"/>
        <end position="141"/>
    </location>
</feature>
<feature type="region of interest" description="Disordered" evidence="2">
    <location>
        <begin position="179"/>
        <end position="294"/>
    </location>
</feature>
<feature type="region of interest" description="Disordered" evidence="2">
    <location>
        <begin position="312"/>
        <end position="392"/>
    </location>
</feature>
<feature type="region of interest" description="Disordered" evidence="2">
    <location>
        <begin position="536"/>
        <end position="587"/>
    </location>
</feature>
<feature type="compositionally biased region" description="Low complexity" evidence="2">
    <location>
        <begin position="53"/>
        <end position="74"/>
    </location>
</feature>
<feature type="compositionally biased region" description="Polar residues" evidence="2">
    <location>
        <begin position="75"/>
        <end position="86"/>
    </location>
</feature>
<feature type="compositionally biased region" description="Low complexity" evidence="2">
    <location>
        <begin position="87"/>
        <end position="136"/>
    </location>
</feature>
<feature type="compositionally biased region" description="Low complexity" evidence="2">
    <location>
        <begin position="183"/>
        <end position="202"/>
    </location>
</feature>
<feature type="compositionally biased region" description="Low complexity" evidence="2">
    <location>
        <begin position="237"/>
        <end position="264"/>
    </location>
</feature>
<feature type="compositionally biased region" description="Low complexity" evidence="2">
    <location>
        <begin position="272"/>
        <end position="292"/>
    </location>
</feature>
<feature type="compositionally biased region" description="Low complexity" evidence="2">
    <location>
        <begin position="316"/>
        <end position="333"/>
    </location>
</feature>
<feature type="compositionally biased region" description="Polar residues" evidence="2">
    <location>
        <begin position="340"/>
        <end position="358"/>
    </location>
</feature>
<feature type="compositionally biased region" description="Polar residues" evidence="2">
    <location>
        <begin position="365"/>
        <end position="379"/>
    </location>
</feature>
<feature type="compositionally biased region" description="Low complexity" evidence="2">
    <location>
        <begin position="538"/>
        <end position="575"/>
    </location>
</feature>
<feature type="compositionally biased region" description="Polar residues" evidence="2">
    <location>
        <begin position="577"/>
        <end position="587"/>
    </location>
</feature>
<sequence>MNHQYIPSPIYSDQNSGVHNVNKSLHNLNINNGNNNYNYSNNNYNNNINNNNNINNNINNNNNNNNNNNNNNINQYHQNHYDQYSDNNCNNSNSNNINNNNNINNNINNNNINNNNNNINSNNNNNNNNNNNNNNNLLKIPQLNISPNGVGGGNGISNGNGVNKIFSKLDLSKVPNSYQLAHNSSMPNSPTSSNISPSTPTSMALNLSSLKSILDSPPAAPAHSASSSHNNDHRTLNINGNHHNNNNNINNNINNNVNNNINNGNGNGNGNGNNNNNNNIGVNGSGSSNSSSPSIGFSIPLLQLKQIGINNQTSPSQQSQQQQQQQQQQQQSQHNGIPLINTTEIHQRSNPSSATNSPRALYYGNESSVENSPFTTPLSSPRGPISPRATINSSMSNLQSNIRVEEQWKKIEYYVNDLSHFIYESIRNKDYSNLSELKEKIDEVVNTSKEIEIIHSIAKSLPPQTRARKKRSTKAEKLQKDLIGIKRSYVTTPKSKGTYCIFCGTMETPEWRKGPGGHKTLCNACGLHYAKNIKKENQNNGGSPNPQQNNVTTTTTTTTSTSTNSPNSNGNNFSPESAMSVSKLISD</sequence>
<accession>Q75JZ1</accession>
<accession>Q54ZG4</accession>
<reference key="1">
    <citation type="journal article" date="2002" name="Nature">
        <title>Sequence and analysis of chromosome 2 of Dictyostelium discoideum.</title>
        <authorList>
            <person name="Gloeckner G."/>
            <person name="Eichinger L."/>
            <person name="Szafranski K."/>
            <person name="Pachebat J.A."/>
            <person name="Bankier A.T."/>
            <person name="Dear P.H."/>
            <person name="Lehmann R."/>
            <person name="Baumgart C."/>
            <person name="Parra G."/>
            <person name="Abril J.F."/>
            <person name="Guigo R."/>
            <person name="Kumpf K."/>
            <person name="Tunggal B."/>
            <person name="Cox E.C."/>
            <person name="Quail M.A."/>
            <person name="Platzer M."/>
            <person name="Rosenthal A."/>
            <person name="Noegel A.A."/>
        </authorList>
    </citation>
    <scope>NUCLEOTIDE SEQUENCE [LARGE SCALE GENOMIC DNA]</scope>
    <source>
        <strain>AX4</strain>
    </source>
</reference>
<reference key="2">
    <citation type="journal article" date="2005" name="Nature">
        <title>The genome of the social amoeba Dictyostelium discoideum.</title>
        <authorList>
            <person name="Eichinger L."/>
            <person name="Pachebat J.A."/>
            <person name="Gloeckner G."/>
            <person name="Rajandream M.A."/>
            <person name="Sucgang R."/>
            <person name="Berriman M."/>
            <person name="Song J."/>
            <person name="Olsen R."/>
            <person name="Szafranski K."/>
            <person name="Xu Q."/>
            <person name="Tunggal B."/>
            <person name="Kummerfeld S."/>
            <person name="Madera M."/>
            <person name="Konfortov B.A."/>
            <person name="Rivero F."/>
            <person name="Bankier A.T."/>
            <person name="Lehmann R."/>
            <person name="Hamlin N."/>
            <person name="Davies R."/>
            <person name="Gaudet P."/>
            <person name="Fey P."/>
            <person name="Pilcher K."/>
            <person name="Chen G."/>
            <person name="Saunders D."/>
            <person name="Sodergren E.J."/>
            <person name="Davis P."/>
            <person name="Kerhornou A."/>
            <person name="Nie X."/>
            <person name="Hall N."/>
            <person name="Anjard C."/>
            <person name="Hemphill L."/>
            <person name="Bason N."/>
            <person name="Farbrother P."/>
            <person name="Desany B."/>
            <person name="Just E."/>
            <person name="Morio T."/>
            <person name="Rost R."/>
            <person name="Churcher C.M."/>
            <person name="Cooper J."/>
            <person name="Haydock S."/>
            <person name="van Driessche N."/>
            <person name="Cronin A."/>
            <person name="Goodhead I."/>
            <person name="Muzny D.M."/>
            <person name="Mourier T."/>
            <person name="Pain A."/>
            <person name="Lu M."/>
            <person name="Harper D."/>
            <person name="Lindsay R."/>
            <person name="Hauser H."/>
            <person name="James K.D."/>
            <person name="Quiles M."/>
            <person name="Madan Babu M."/>
            <person name="Saito T."/>
            <person name="Buchrieser C."/>
            <person name="Wardroper A."/>
            <person name="Felder M."/>
            <person name="Thangavelu M."/>
            <person name="Johnson D."/>
            <person name="Knights A."/>
            <person name="Loulseged H."/>
            <person name="Mungall K.L."/>
            <person name="Oliver K."/>
            <person name="Price C."/>
            <person name="Quail M.A."/>
            <person name="Urushihara H."/>
            <person name="Hernandez J."/>
            <person name="Rabbinowitsch E."/>
            <person name="Steffen D."/>
            <person name="Sanders M."/>
            <person name="Ma J."/>
            <person name="Kohara Y."/>
            <person name="Sharp S."/>
            <person name="Simmonds M.N."/>
            <person name="Spiegler S."/>
            <person name="Tivey A."/>
            <person name="Sugano S."/>
            <person name="White B."/>
            <person name="Walker D."/>
            <person name="Woodward J.R."/>
            <person name="Winckler T."/>
            <person name="Tanaka Y."/>
            <person name="Shaulsky G."/>
            <person name="Schleicher M."/>
            <person name="Weinstock G.M."/>
            <person name="Rosenthal A."/>
            <person name="Cox E.C."/>
            <person name="Chisholm R.L."/>
            <person name="Gibbs R.A."/>
            <person name="Loomis W.F."/>
            <person name="Platzer M."/>
            <person name="Kay R.R."/>
            <person name="Williams J.G."/>
            <person name="Dear P.H."/>
            <person name="Noegel A.A."/>
            <person name="Barrell B.G."/>
            <person name="Kuspa A."/>
        </authorList>
    </citation>
    <scope>NUCLEOTIDE SEQUENCE [LARGE SCALE GENOMIC DNA]</scope>
    <source>
        <strain>AX4</strain>
    </source>
</reference>
<protein>
    <recommendedName>
        <fullName>GATA zinc finger domain-containing protein 3</fullName>
    </recommendedName>
</protein>
<organism>
    <name type="scientific">Dictyostelium discoideum</name>
    <name type="common">Social amoeba</name>
    <dbReference type="NCBI Taxonomy" id="44689"/>
    <lineage>
        <taxon>Eukaryota</taxon>
        <taxon>Amoebozoa</taxon>
        <taxon>Evosea</taxon>
        <taxon>Eumycetozoa</taxon>
        <taxon>Dictyostelia</taxon>
        <taxon>Dictyosteliales</taxon>
        <taxon>Dictyosteliaceae</taxon>
        <taxon>Dictyostelium</taxon>
    </lineage>
</organism>
<dbReference type="EMBL" id="AAFI02000020">
    <property type="protein sequence ID" value="EAL68612.1"/>
    <property type="molecule type" value="Genomic_DNA"/>
</dbReference>
<dbReference type="RefSeq" id="XP_642533.1">
    <property type="nucleotide sequence ID" value="XM_637441.1"/>
</dbReference>
<dbReference type="SMR" id="Q75JZ1"/>
<dbReference type="FunCoup" id="Q75JZ1">
    <property type="interactions" value="794"/>
</dbReference>
<dbReference type="STRING" id="44689.Q75JZ1"/>
<dbReference type="PaxDb" id="44689-DDB0220470"/>
<dbReference type="EnsemblProtists" id="EAL68612">
    <property type="protein sequence ID" value="EAL68612"/>
    <property type="gene ID" value="DDB_G0277589"/>
</dbReference>
<dbReference type="GeneID" id="8621095"/>
<dbReference type="KEGG" id="ddi:DDB_G0277589"/>
<dbReference type="dictyBase" id="DDB_G0277589">
    <property type="gene designation" value="gtaC"/>
</dbReference>
<dbReference type="VEuPathDB" id="AmoebaDB:DDB_G0277589"/>
<dbReference type="eggNOG" id="KOG1601">
    <property type="taxonomic scope" value="Eukaryota"/>
</dbReference>
<dbReference type="HOGENOM" id="CLU_464978_0_0_1"/>
<dbReference type="InParanoid" id="Q75JZ1"/>
<dbReference type="OMA" id="IRVEEQW"/>
<dbReference type="PRO" id="PR:Q75JZ1"/>
<dbReference type="Proteomes" id="UP000002195">
    <property type="component" value="Chromosome 2"/>
</dbReference>
<dbReference type="GO" id="GO:0005737">
    <property type="term" value="C:cytoplasm"/>
    <property type="evidence" value="ECO:0000314"/>
    <property type="project" value="dictyBase"/>
</dbReference>
<dbReference type="GO" id="GO:0005634">
    <property type="term" value="C:nucleus"/>
    <property type="evidence" value="ECO:0000314"/>
    <property type="project" value="dictyBase"/>
</dbReference>
<dbReference type="GO" id="GO:0003700">
    <property type="term" value="F:DNA-binding transcription factor activity"/>
    <property type="evidence" value="ECO:0000314"/>
    <property type="project" value="dictyBase"/>
</dbReference>
<dbReference type="GO" id="GO:0000976">
    <property type="term" value="F:transcription cis-regulatory region binding"/>
    <property type="evidence" value="ECO:0000314"/>
    <property type="project" value="dictyBase"/>
</dbReference>
<dbReference type="GO" id="GO:0008270">
    <property type="term" value="F:zinc ion binding"/>
    <property type="evidence" value="ECO:0007669"/>
    <property type="project" value="UniProtKB-KW"/>
</dbReference>
<dbReference type="GO" id="GO:0140582">
    <property type="term" value="P:adenylate cyclase-activating G protein-coupled cAMP receptor signaling pathway"/>
    <property type="evidence" value="ECO:0000314"/>
    <property type="project" value="dictyBase"/>
</dbReference>
<dbReference type="GO" id="GO:0031152">
    <property type="term" value="P:aggregation involved in sorocarp development"/>
    <property type="evidence" value="ECO:0000270"/>
    <property type="project" value="dictyBase"/>
</dbReference>
<dbReference type="GO" id="GO:0043326">
    <property type="term" value="P:chemotaxis to folate"/>
    <property type="evidence" value="ECO:0000315"/>
    <property type="project" value="dictyBase"/>
</dbReference>
<dbReference type="GO" id="GO:0006351">
    <property type="term" value="P:DNA-templated transcription"/>
    <property type="evidence" value="ECO:0000314"/>
    <property type="project" value="dictyBase"/>
</dbReference>
<dbReference type="GO" id="GO:0060176">
    <property type="term" value="P:regulation of aggregation involved in sorocarp development"/>
    <property type="evidence" value="ECO:0000315"/>
    <property type="project" value="dictyBase"/>
</dbReference>
<dbReference type="GO" id="GO:0006357">
    <property type="term" value="P:regulation of transcription by RNA polymerase II"/>
    <property type="evidence" value="ECO:0000318"/>
    <property type="project" value="GO_Central"/>
</dbReference>
<dbReference type="GO" id="GO:0031149">
    <property type="term" value="P:sorocarp stalk cell differentiation"/>
    <property type="evidence" value="ECO:0000315"/>
    <property type="project" value="dictyBase"/>
</dbReference>
<dbReference type="CDD" id="cd00202">
    <property type="entry name" value="ZnF_GATA"/>
    <property type="match status" value="1"/>
</dbReference>
<dbReference type="Gene3D" id="3.30.50.10">
    <property type="entry name" value="Erythroid Transcription Factor GATA-1, subunit A"/>
    <property type="match status" value="1"/>
</dbReference>
<dbReference type="InterPro" id="IPR051140">
    <property type="entry name" value="GATA_TF"/>
</dbReference>
<dbReference type="InterPro" id="IPR000679">
    <property type="entry name" value="Znf_GATA"/>
</dbReference>
<dbReference type="InterPro" id="IPR013088">
    <property type="entry name" value="Znf_NHR/GATA"/>
</dbReference>
<dbReference type="PANTHER" id="PTHR45658">
    <property type="entry name" value="GATA TRANSCRIPTION FACTOR"/>
    <property type="match status" value="1"/>
</dbReference>
<dbReference type="PANTHER" id="PTHR45658:SF128">
    <property type="entry name" value="GATA ZINC FINGER DOMAIN-CONTAINING PROTEIN 10-RELATED"/>
    <property type="match status" value="1"/>
</dbReference>
<dbReference type="Pfam" id="PF00320">
    <property type="entry name" value="GATA"/>
    <property type="match status" value="1"/>
</dbReference>
<dbReference type="SMART" id="SM00401">
    <property type="entry name" value="ZnF_GATA"/>
    <property type="match status" value="1"/>
</dbReference>
<dbReference type="SUPFAM" id="SSF57716">
    <property type="entry name" value="Glucocorticoid receptor-like (DNA-binding domain)"/>
    <property type="match status" value="1"/>
</dbReference>
<dbReference type="PROSITE" id="PS50114">
    <property type="entry name" value="GATA_ZN_FINGER_2"/>
    <property type="match status" value="1"/>
</dbReference>